<organism>
    <name type="scientific">Prochlorococcus marinus subsp. pastoris (strain PCC 9511)</name>
    <dbReference type="NCBI Taxonomy" id="100363"/>
    <lineage>
        <taxon>Bacteria</taxon>
        <taxon>Bacillati</taxon>
        <taxon>Cyanobacteriota</taxon>
        <taxon>Cyanophyceae</taxon>
        <taxon>Synechococcales</taxon>
        <taxon>Prochlorococcaceae</taxon>
        <taxon>Prochlorococcus</taxon>
    </lineage>
</organism>
<keyword id="KW-0963">Cytoplasm</keyword>
<keyword id="KW-0378">Hydrolase</keyword>
<keyword id="KW-0479">Metal-binding</keyword>
<keyword id="KW-0533">Nickel</keyword>
<accession>Q9L644</accession>
<proteinExistence type="evidence at protein level"/>
<protein>
    <recommendedName>
        <fullName evidence="1">Urease subunit alpha</fullName>
        <ecNumber evidence="1">3.5.1.5</ecNumber>
    </recommendedName>
    <alternativeName>
        <fullName evidence="1">Urea amidohydrolase subunit alpha</fullName>
    </alternativeName>
</protein>
<dbReference type="EC" id="3.5.1.5" evidence="1"/>
<dbReference type="EMBL" id="AF242489">
    <property type="protein sequence ID" value="AAF70248.1"/>
    <property type="molecule type" value="Genomic_DNA"/>
</dbReference>
<dbReference type="SMR" id="Q9L644"/>
<dbReference type="MEROPS" id="M38.982"/>
<dbReference type="UniPathway" id="UPA00258">
    <property type="reaction ID" value="UER00370"/>
</dbReference>
<dbReference type="GO" id="GO:0005737">
    <property type="term" value="C:cytoplasm"/>
    <property type="evidence" value="ECO:0007669"/>
    <property type="project" value="UniProtKB-SubCell"/>
</dbReference>
<dbReference type="GO" id="GO:0016151">
    <property type="term" value="F:nickel cation binding"/>
    <property type="evidence" value="ECO:0007669"/>
    <property type="project" value="UniProtKB-UniRule"/>
</dbReference>
<dbReference type="GO" id="GO:0009039">
    <property type="term" value="F:urease activity"/>
    <property type="evidence" value="ECO:0007669"/>
    <property type="project" value="UniProtKB-UniRule"/>
</dbReference>
<dbReference type="GO" id="GO:0043419">
    <property type="term" value="P:urea catabolic process"/>
    <property type="evidence" value="ECO:0007669"/>
    <property type="project" value="UniProtKB-UniRule"/>
</dbReference>
<dbReference type="CDD" id="cd00375">
    <property type="entry name" value="Urease_alpha"/>
    <property type="match status" value="1"/>
</dbReference>
<dbReference type="Gene3D" id="3.20.20.140">
    <property type="entry name" value="Metal-dependent hydrolases"/>
    <property type="match status" value="1"/>
</dbReference>
<dbReference type="Gene3D" id="2.30.40.10">
    <property type="entry name" value="Urease, subunit C, domain 1"/>
    <property type="match status" value="1"/>
</dbReference>
<dbReference type="HAMAP" id="MF_01953">
    <property type="entry name" value="Urease_alpha"/>
    <property type="match status" value="1"/>
</dbReference>
<dbReference type="InterPro" id="IPR006680">
    <property type="entry name" value="Amidohydro-rel"/>
</dbReference>
<dbReference type="InterPro" id="IPR011059">
    <property type="entry name" value="Metal-dep_hydrolase_composite"/>
</dbReference>
<dbReference type="InterPro" id="IPR032466">
    <property type="entry name" value="Metal_Hydrolase"/>
</dbReference>
<dbReference type="InterPro" id="IPR011612">
    <property type="entry name" value="Urease_alpha_N_dom"/>
</dbReference>
<dbReference type="InterPro" id="IPR050112">
    <property type="entry name" value="Urease_alpha_subunit"/>
</dbReference>
<dbReference type="InterPro" id="IPR017950">
    <property type="entry name" value="Urease_AS"/>
</dbReference>
<dbReference type="InterPro" id="IPR005848">
    <property type="entry name" value="Urease_asu"/>
</dbReference>
<dbReference type="InterPro" id="IPR017951">
    <property type="entry name" value="Urease_asu_c"/>
</dbReference>
<dbReference type="NCBIfam" id="NF009685">
    <property type="entry name" value="PRK13206.1"/>
    <property type="match status" value="1"/>
</dbReference>
<dbReference type="NCBIfam" id="NF009686">
    <property type="entry name" value="PRK13207.1"/>
    <property type="match status" value="1"/>
</dbReference>
<dbReference type="NCBIfam" id="TIGR01792">
    <property type="entry name" value="urease_alph"/>
    <property type="match status" value="1"/>
</dbReference>
<dbReference type="PANTHER" id="PTHR43440">
    <property type="entry name" value="UREASE"/>
    <property type="match status" value="1"/>
</dbReference>
<dbReference type="PANTHER" id="PTHR43440:SF1">
    <property type="entry name" value="UREASE"/>
    <property type="match status" value="1"/>
</dbReference>
<dbReference type="Pfam" id="PF01979">
    <property type="entry name" value="Amidohydro_1"/>
    <property type="match status" value="1"/>
</dbReference>
<dbReference type="Pfam" id="PF00449">
    <property type="entry name" value="Urease_alpha"/>
    <property type="match status" value="1"/>
</dbReference>
<dbReference type="PRINTS" id="PR01752">
    <property type="entry name" value="UREASE"/>
</dbReference>
<dbReference type="SUPFAM" id="SSF51338">
    <property type="entry name" value="Composite domain of metallo-dependent hydrolases"/>
    <property type="match status" value="2"/>
</dbReference>
<dbReference type="SUPFAM" id="SSF51556">
    <property type="entry name" value="Metallo-dependent hydrolases"/>
    <property type="match status" value="1"/>
</dbReference>
<dbReference type="PROSITE" id="PS00145">
    <property type="entry name" value="UREASE_2"/>
    <property type="match status" value="1"/>
</dbReference>
<dbReference type="PROSITE" id="PS51368">
    <property type="entry name" value="UREASE_3"/>
    <property type="match status" value="1"/>
</dbReference>
<name>URE1_PROS9</name>
<reference key="1">
    <citation type="journal article" date="2000" name="Microbiology">
        <title>Prochlorococcus marinus strain PCC 9511, a picoplanktonic cyanobacterium, synthesizes the smallest urease.</title>
        <authorList>
            <person name="Palinska K.A."/>
            <person name="Jahns T."/>
            <person name="Rippka R."/>
            <person name="Tandeau de Marsac N."/>
        </authorList>
    </citation>
    <scope>NUCLEOTIDE SEQUENCE [GENOMIC DNA]</scope>
    <scope>CATALYTIC ACTIVITY</scope>
    <scope>ACTIVITY REGULATION</scope>
    <scope>SUBUNIT</scope>
    <scope>BIOPHYSICOCHEMICAL PROPERTIES</scope>
</reference>
<evidence type="ECO:0000255" key="1">
    <source>
        <dbReference type="HAMAP-Rule" id="MF_01953"/>
    </source>
</evidence>
<evidence type="ECO:0000269" key="2">
    <source>
    </source>
</evidence>
<sequence>MSYKINRKTYAQTYGPTKGDRVRLADTELIIEVEKDFTTYGDEVKFGGGKVIRDGMGQSQVTREDGAVDTVITNALIVDWWGIVKADVGLKDGKIYEIGKAGNPDIQDNINIIIGSSTEVIAGEGHILTAGSIDTHIHFICPQQIETALASGVTTMLGGGTGPATGTNATTCTPGAFHISRMIQSAEAFPVNLGFFGKGNSSNETNLFEQVNAGACGLKLHEDWGTTPSTINSCLNVADTLDVQVCIHTDTLNEAGFVEDTIAAIAGRTIHTFHTEGAGGGHAPDIIKICGENNVLPSSTNPTRPYTKNTLEEHLDMLMVCHHLDSKIPEDIAFAESRIRRETIAAEDILHDIGAFSIIASDSQAMGRVGEVITRTFQTAHKMKVQRGPLPEDSDRNDNYRVKRYISKVTINPAIAHGINRFVGSIEKGKIADLVLWKPSFFGVKPELVVKGGSIVWSQMGDANASIPTPGPVHGRPMFANYGQSLLKSSFTFLSKNAIELDIPNKLSLQKNCLAVENTRSINKLDLKLNNKLPNITVDPQTYEVFADGVLLSCEPLEEVPMAQKYFLL</sequence>
<gene>
    <name evidence="1" type="primary">ureC</name>
</gene>
<comment type="catalytic activity">
    <reaction evidence="1 2">
        <text>urea + 2 H2O + H(+) = hydrogencarbonate + 2 NH4(+)</text>
        <dbReference type="Rhea" id="RHEA:20557"/>
        <dbReference type="ChEBI" id="CHEBI:15377"/>
        <dbReference type="ChEBI" id="CHEBI:15378"/>
        <dbReference type="ChEBI" id="CHEBI:16199"/>
        <dbReference type="ChEBI" id="CHEBI:17544"/>
        <dbReference type="ChEBI" id="CHEBI:28938"/>
        <dbReference type="EC" id="3.5.1.5"/>
    </reaction>
</comment>
<comment type="cofactor">
    <cofactor evidence="1">
        <name>Ni cation</name>
        <dbReference type="ChEBI" id="CHEBI:25516"/>
    </cofactor>
    <text evidence="1">Binds 2 nickel ions per subunit.</text>
</comment>
<comment type="activity regulation">
    <text evidence="2">Inhibited by HgCl2 and acetohydroxyamic acid slightly by EDTA, but not by boric acid or L-methionine-DL-sulfoximine.</text>
</comment>
<comment type="biophysicochemical properties">
    <kinetics>
        <KM evidence="2">0.23 mM for urea</KM>
        <Vmax evidence="2">0.095 mmol/min/mg enzyme</Vmax>
    </kinetics>
    <temperatureDependence>
        <text evidence="2">Optimum temperature is 55 degrees Celsius.</text>
    </temperatureDependence>
</comment>
<comment type="pathway">
    <text evidence="1">Nitrogen metabolism; urea degradation; CO(2) and NH(3) from urea (urease route): step 1/1.</text>
</comment>
<comment type="subunit">
    <text evidence="2">Heterotrimer of UreA (gamma), UreB (beta) and UreC (alpha) subunits. Two heterotrimers associate to form the active enzyme. In most bacteria it is thought that three heterotrimers form the active enzyme.</text>
</comment>
<comment type="subcellular location">
    <subcellularLocation>
        <location evidence="1">Cytoplasm</location>
    </subcellularLocation>
</comment>
<comment type="PTM">
    <text evidence="1">Carboxylation allows a single lysine to coordinate two nickel ions.</text>
</comment>
<comment type="similarity">
    <text evidence="1">Belongs to the metallo-dependent hydrolases superfamily. Urease alpha subunit family.</text>
</comment>
<feature type="chain" id="PRO_0000234165" description="Urease subunit alpha">
    <location>
        <begin position="1"/>
        <end position="569"/>
    </location>
</feature>
<feature type="domain" description="Urease" evidence="1">
    <location>
        <begin position="131"/>
        <end position="569"/>
    </location>
</feature>
<feature type="active site" description="Proton donor" evidence="1">
    <location>
        <position position="322"/>
    </location>
</feature>
<feature type="binding site" evidence="1">
    <location>
        <position position="136"/>
    </location>
    <ligand>
        <name>Ni(2+)</name>
        <dbReference type="ChEBI" id="CHEBI:49786"/>
        <label>1</label>
    </ligand>
</feature>
<feature type="binding site" evidence="1">
    <location>
        <position position="138"/>
    </location>
    <ligand>
        <name>Ni(2+)</name>
        <dbReference type="ChEBI" id="CHEBI:49786"/>
        <label>1</label>
    </ligand>
</feature>
<feature type="binding site" description="via carbamate group" evidence="1">
    <location>
        <position position="219"/>
    </location>
    <ligand>
        <name>Ni(2+)</name>
        <dbReference type="ChEBI" id="CHEBI:49786"/>
        <label>1</label>
    </ligand>
</feature>
<feature type="binding site" description="via carbamate group" evidence="1">
    <location>
        <position position="219"/>
    </location>
    <ligand>
        <name>Ni(2+)</name>
        <dbReference type="ChEBI" id="CHEBI:49786"/>
        <label>2</label>
    </ligand>
</feature>
<feature type="binding site" evidence="1">
    <location>
        <position position="221"/>
    </location>
    <ligand>
        <name>substrate</name>
    </ligand>
</feature>
<feature type="binding site" evidence="1">
    <location>
        <position position="248"/>
    </location>
    <ligand>
        <name>Ni(2+)</name>
        <dbReference type="ChEBI" id="CHEBI:49786"/>
        <label>2</label>
    </ligand>
</feature>
<feature type="binding site" evidence="1">
    <location>
        <position position="274"/>
    </location>
    <ligand>
        <name>Ni(2+)</name>
        <dbReference type="ChEBI" id="CHEBI:49786"/>
        <label>2</label>
    </ligand>
</feature>
<feature type="binding site" evidence="1">
    <location>
        <position position="362"/>
    </location>
    <ligand>
        <name>Ni(2+)</name>
        <dbReference type="ChEBI" id="CHEBI:49786"/>
        <label>1</label>
    </ligand>
</feature>
<feature type="modified residue" description="N6-carboxylysine" evidence="1">
    <location>
        <position position="219"/>
    </location>
</feature>